<keyword id="KW-0396">Initiation factor</keyword>
<keyword id="KW-0648">Protein biosynthesis</keyword>
<keyword id="KW-0694">RNA-binding</keyword>
<proteinExistence type="inferred from homology"/>
<accession>C3MYF1</accession>
<evidence type="ECO:0000255" key="1">
    <source>
        <dbReference type="HAMAP-Rule" id="MF_00231"/>
    </source>
</evidence>
<gene>
    <name evidence="1" type="primary">eif2a</name>
    <name type="ordered locus">M1425_1169</name>
</gene>
<sequence length="266" mass="30340">MIYSRSRLPSEGEILIATVKQVFDYGSYVTLDEYGGLQAFLPWSEVSSKWVKNIRDVLKENRKVVVKVIRVDRRKGTVDVSLKKVTDDERRKKNLQWKKIQRLDKILELVSQQLKLSEKDAWEQVAWKLEAKYGDPISAIERAVKEGEKILIDAGVPEIWIKPLLEEAAKHTEEKKVKMSGLITVKTSEPLGVQKIKEVISKALENIEQDYESILNVKIYTIGAPRYRVDVVGTNPKDASEALNQIISNLIKIGKEENVDISVVKK</sequence>
<protein>
    <recommendedName>
        <fullName evidence="1">Translation initiation factor 2 subunit alpha</fullName>
    </recommendedName>
    <alternativeName>
        <fullName evidence="1">aIF2-alpha</fullName>
    </alternativeName>
    <alternativeName>
        <fullName evidence="1">eIF-2-alpha</fullName>
    </alternativeName>
</protein>
<feature type="chain" id="PRO_1000204373" description="Translation initiation factor 2 subunit alpha">
    <location>
        <begin position="1"/>
        <end position="266"/>
    </location>
</feature>
<feature type="domain" description="S1 motif" evidence="1">
    <location>
        <begin position="12"/>
        <end position="83"/>
    </location>
</feature>
<comment type="function">
    <text evidence="1">eIF-2 functions in the early steps of protein synthesis by forming a ternary complex with GTP and initiator tRNA.</text>
</comment>
<comment type="subunit">
    <text evidence="1">Heterotrimer composed of an alpha, a beta and a gamma chain.</text>
</comment>
<comment type="similarity">
    <text evidence="1">Belongs to the eIF-2-alpha family.</text>
</comment>
<dbReference type="EMBL" id="CP001400">
    <property type="protein sequence ID" value="ACP37930.1"/>
    <property type="molecule type" value="Genomic_DNA"/>
</dbReference>
<dbReference type="RefSeq" id="WP_012711192.1">
    <property type="nucleotide sequence ID" value="NC_012588.1"/>
</dbReference>
<dbReference type="SMR" id="C3MYF1"/>
<dbReference type="KEGG" id="sia:M1425_1169"/>
<dbReference type="HOGENOM" id="CLU_033458_0_2_2"/>
<dbReference type="Proteomes" id="UP000001350">
    <property type="component" value="Chromosome"/>
</dbReference>
<dbReference type="GO" id="GO:0043022">
    <property type="term" value="F:ribosome binding"/>
    <property type="evidence" value="ECO:0007669"/>
    <property type="project" value="TreeGrafter"/>
</dbReference>
<dbReference type="GO" id="GO:0003723">
    <property type="term" value="F:RNA binding"/>
    <property type="evidence" value="ECO:0007669"/>
    <property type="project" value="UniProtKB-UniRule"/>
</dbReference>
<dbReference type="GO" id="GO:0003743">
    <property type="term" value="F:translation initiation factor activity"/>
    <property type="evidence" value="ECO:0007669"/>
    <property type="project" value="UniProtKB-UniRule"/>
</dbReference>
<dbReference type="CDD" id="cd04452">
    <property type="entry name" value="S1_IF2_alpha"/>
    <property type="match status" value="1"/>
</dbReference>
<dbReference type="FunFam" id="2.40.50.140:FF:000015">
    <property type="entry name" value="Eukaryotic translation initiation factor 2 subunit alpha"/>
    <property type="match status" value="1"/>
</dbReference>
<dbReference type="Gene3D" id="3.30.70.1130">
    <property type="entry name" value="EIF_2_alpha"/>
    <property type="match status" value="1"/>
</dbReference>
<dbReference type="Gene3D" id="2.40.50.140">
    <property type="entry name" value="Nucleic acid-binding proteins"/>
    <property type="match status" value="1"/>
</dbReference>
<dbReference type="Gene3D" id="1.10.150.190">
    <property type="entry name" value="Translation initiation factor 2, subunit 1, domain 2"/>
    <property type="match status" value="1"/>
</dbReference>
<dbReference type="HAMAP" id="MF_00231">
    <property type="entry name" value="eIF_2_alpha"/>
    <property type="match status" value="1"/>
</dbReference>
<dbReference type="InterPro" id="IPR012340">
    <property type="entry name" value="NA-bd_OB-fold"/>
</dbReference>
<dbReference type="InterPro" id="IPR003029">
    <property type="entry name" value="S1_domain"/>
</dbReference>
<dbReference type="InterPro" id="IPR044126">
    <property type="entry name" value="S1_IF2_alpha"/>
</dbReference>
<dbReference type="InterPro" id="IPR022964">
    <property type="entry name" value="TIF2_asu_arc"/>
</dbReference>
<dbReference type="InterPro" id="IPR024055">
    <property type="entry name" value="TIF2_asu_C"/>
</dbReference>
<dbReference type="InterPro" id="IPR024054">
    <property type="entry name" value="TIF2_asu_middle_sf"/>
</dbReference>
<dbReference type="InterPro" id="IPR011488">
    <property type="entry name" value="TIF_2_asu"/>
</dbReference>
<dbReference type="NCBIfam" id="NF003062">
    <property type="entry name" value="PRK03987.1-1"/>
    <property type="match status" value="1"/>
</dbReference>
<dbReference type="PANTHER" id="PTHR10602">
    <property type="entry name" value="EUKARYOTIC TRANSLATION INITIATION FACTOR 2 SUBUNIT 1"/>
    <property type="match status" value="1"/>
</dbReference>
<dbReference type="PANTHER" id="PTHR10602:SF0">
    <property type="entry name" value="EUKARYOTIC TRANSLATION INITIATION FACTOR 2 SUBUNIT 1"/>
    <property type="match status" value="1"/>
</dbReference>
<dbReference type="Pfam" id="PF07541">
    <property type="entry name" value="EIF_2_alpha"/>
    <property type="match status" value="1"/>
</dbReference>
<dbReference type="Pfam" id="PF00575">
    <property type="entry name" value="S1"/>
    <property type="match status" value="1"/>
</dbReference>
<dbReference type="SMART" id="SM00316">
    <property type="entry name" value="S1"/>
    <property type="match status" value="1"/>
</dbReference>
<dbReference type="SUPFAM" id="SSF110993">
    <property type="entry name" value="eIF-2-alpha, C-terminal domain"/>
    <property type="match status" value="1"/>
</dbReference>
<dbReference type="SUPFAM" id="SSF116742">
    <property type="entry name" value="eIF2alpha middle domain-like"/>
    <property type="match status" value="1"/>
</dbReference>
<dbReference type="SUPFAM" id="SSF50249">
    <property type="entry name" value="Nucleic acid-binding proteins"/>
    <property type="match status" value="1"/>
</dbReference>
<dbReference type="PROSITE" id="PS50126">
    <property type="entry name" value="S1"/>
    <property type="match status" value="1"/>
</dbReference>
<name>IF2A_SACI4</name>
<organism>
    <name type="scientific">Saccharolobus islandicus (strain M.14.25 / Kamchatka #1)</name>
    <name type="common">Sulfolobus islandicus</name>
    <dbReference type="NCBI Taxonomy" id="427317"/>
    <lineage>
        <taxon>Archaea</taxon>
        <taxon>Thermoproteota</taxon>
        <taxon>Thermoprotei</taxon>
        <taxon>Sulfolobales</taxon>
        <taxon>Sulfolobaceae</taxon>
        <taxon>Saccharolobus</taxon>
    </lineage>
</organism>
<reference key="1">
    <citation type="journal article" date="2009" name="Proc. Natl. Acad. Sci. U.S.A.">
        <title>Biogeography of the Sulfolobus islandicus pan-genome.</title>
        <authorList>
            <person name="Reno M.L."/>
            <person name="Held N.L."/>
            <person name="Fields C.J."/>
            <person name="Burke P.V."/>
            <person name="Whitaker R.J."/>
        </authorList>
    </citation>
    <scope>NUCLEOTIDE SEQUENCE [LARGE SCALE GENOMIC DNA]</scope>
    <source>
        <strain>M.14.25 / Kamchatka #1</strain>
    </source>
</reference>